<sequence>MKSSIDILPDGSITTPKGFKAGAIYAGIKKKSKNNLDLAILYSDTPCIAAGIFTTNKFRAAPVYISEHNLGFTDNRAIVVNSGCANAGTGEAGMADAIEMVKATAESLNMQPKDVLIASTGVIGHRLPIDKIKENVRLIGLSQRNGHEFARAIMTTDTRSKEIAVQVNIEGFQFYIAGAAKGAGMIHPNMATMLGFITTDASVSKEFLQFALKEAADVSFNMITVDGDTSTNDSLFMLSNGQAENPTFAGNTEYSLVFQQALTIVCQNLAKSIARDGEGAKRLIEIQVEGAANLEDARLIARVIAGSPLVKTAVHGADPNWGRILAAAGRAGADFDIDMVDLYLGESPVLLKGARTGVDEKELSSWLRQVEVIIKLNLNLGQGKAAAWGCDLSAEYVKINADYTT</sequence>
<dbReference type="EC" id="2.3.1.35" evidence="1"/>
<dbReference type="EC" id="2.3.1.1" evidence="1"/>
<dbReference type="EMBL" id="AJ965256">
    <property type="protein sequence ID" value="CAI83263.1"/>
    <property type="molecule type" value="Genomic_DNA"/>
</dbReference>
<dbReference type="RefSeq" id="WP_011309614.1">
    <property type="nucleotide sequence ID" value="NC_007356.1"/>
</dbReference>
<dbReference type="SMR" id="Q3ZYG4"/>
<dbReference type="MEROPS" id="T05.002"/>
<dbReference type="KEGG" id="deh:cbdbA1179"/>
<dbReference type="HOGENOM" id="CLU_027172_1_0_0"/>
<dbReference type="UniPathway" id="UPA00068">
    <property type="reaction ID" value="UER00106"/>
</dbReference>
<dbReference type="UniPathway" id="UPA00068">
    <property type="reaction ID" value="UER00111"/>
</dbReference>
<dbReference type="Proteomes" id="UP000000433">
    <property type="component" value="Chromosome"/>
</dbReference>
<dbReference type="GO" id="GO:0005737">
    <property type="term" value="C:cytoplasm"/>
    <property type="evidence" value="ECO:0007669"/>
    <property type="project" value="UniProtKB-SubCell"/>
</dbReference>
<dbReference type="GO" id="GO:0004358">
    <property type="term" value="F:glutamate N-acetyltransferase activity"/>
    <property type="evidence" value="ECO:0007669"/>
    <property type="project" value="UniProtKB-UniRule"/>
</dbReference>
<dbReference type="GO" id="GO:0004042">
    <property type="term" value="F:L-glutamate N-acetyltransferase activity"/>
    <property type="evidence" value="ECO:0007669"/>
    <property type="project" value="UniProtKB-UniRule"/>
</dbReference>
<dbReference type="GO" id="GO:0006526">
    <property type="term" value="P:L-arginine biosynthetic process"/>
    <property type="evidence" value="ECO:0007669"/>
    <property type="project" value="UniProtKB-UniRule"/>
</dbReference>
<dbReference type="GO" id="GO:0006592">
    <property type="term" value="P:ornithine biosynthetic process"/>
    <property type="evidence" value="ECO:0007669"/>
    <property type="project" value="TreeGrafter"/>
</dbReference>
<dbReference type="CDD" id="cd02152">
    <property type="entry name" value="OAT"/>
    <property type="match status" value="1"/>
</dbReference>
<dbReference type="FunFam" id="3.10.20.340:FF:000001">
    <property type="entry name" value="Arginine biosynthesis bifunctional protein ArgJ, chloroplastic"/>
    <property type="match status" value="1"/>
</dbReference>
<dbReference type="FunFam" id="3.60.70.12:FF:000001">
    <property type="entry name" value="Arginine biosynthesis bifunctional protein ArgJ, chloroplastic"/>
    <property type="match status" value="1"/>
</dbReference>
<dbReference type="Gene3D" id="3.10.20.340">
    <property type="entry name" value="ArgJ beta chain, C-terminal domain"/>
    <property type="match status" value="1"/>
</dbReference>
<dbReference type="Gene3D" id="3.60.70.12">
    <property type="entry name" value="L-amino peptidase D-ALA esterase/amidase"/>
    <property type="match status" value="1"/>
</dbReference>
<dbReference type="HAMAP" id="MF_01106">
    <property type="entry name" value="ArgJ"/>
    <property type="match status" value="1"/>
</dbReference>
<dbReference type="InterPro" id="IPR002813">
    <property type="entry name" value="Arg_biosynth_ArgJ"/>
</dbReference>
<dbReference type="InterPro" id="IPR016117">
    <property type="entry name" value="ArgJ-like_dom_sf"/>
</dbReference>
<dbReference type="InterPro" id="IPR042195">
    <property type="entry name" value="ArgJ_beta_C"/>
</dbReference>
<dbReference type="NCBIfam" id="TIGR00120">
    <property type="entry name" value="ArgJ"/>
    <property type="match status" value="1"/>
</dbReference>
<dbReference type="NCBIfam" id="NF003802">
    <property type="entry name" value="PRK05388.1"/>
    <property type="match status" value="1"/>
</dbReference>
<dbReference type="PANTHER" id="PTHR23100">
    <property type="entry name" value="ARGININE BIOSYNTHESIS BIFUNCTIONAL PROTEIN ARGJ"/>
    <property type="match status" value="1"/>
</dbReference>
<dbReference type="PANTHER" id="PTHR23100:SF0">
    <property type="entry name" value="ARGININE BIOSYNTHESIS BIFUNCTIONAL PROTEIN ARGJ, MITOCHONDRIAL"/>
    <property type="match status" value="1"/>
</dbReference>
<dbReference type="Pfam" id="PF01960">
    <property type="entry name" value="ArgJ"/>
    <property type="match status" value="1"/>
</dbReference>
<dbReference type="SUPFAM" id="SSF56266">
    <property type="entry name" value="DmpA/ArgJ-like"/>
    <property type="match status" value="1"/>
</dbReference>
<evidence type="ECO:0000255" key="1">
    <source>
        <dbReference type="HAMAP-Rule" id="MF_01106"/>
    </source>
</evidence>
<proteinExistence type="inferred from homology"/>
<keyword id="KW-0012">Acyltransferase</keyword>
<keyword id="KW-0028">Amino-acid biosynthesis</keyword>
<keyword id="KW-0055">Arginine biosynthesis</keyword>
<keyword id="KW-0068">Autocatalytic cleavage</keyword>
<keyword id="KW-0963">Cytoplasm</keyword>
<keyword id="KW-0511">Multifunctional enzyme</keyword>
<keyword id="KW-0808">Transferase</keyword>
<reference key="1">
    <citation type="journal article" date="2005" name="Nat. Biotechnol.">
        <title>Genome sequence of the chlorinated compound-respiring bacterium Dehalococcoides species strain CBDB1.</title>
        <authorList>
            <person name="Kube M."/>
            <person name="Beck A."/>
            <person name="Zinder S.H."/>
            <person name="Kuhl H."/>
            <person name="Reinhardt R."/>
            <person name="Adrian L."/>
        </authorList>
    </citation>
    <scope>NUCLEOTIDE SEQUENCE [LARGE SCALE GENOMIC DNA]</scope>
    <source>
        <strain>CBDB1</strain>
    </source>
</reference>
<feature type="chain" id="PRO_0000227226" description="Arginine biosynthesis bifunctional protein ArgJ alpha chain" evidence="1">
    <location>
        <begin position="1"/>
        <end position="191"/>
    </location>
</feature>
<feature type="chain" id="PRO_0000227227" description="Arginine biosynthesis bifunctional protein ArgJ beta chain" evidence="1">
    <location>
        <begin position="192"/>
        <end position="405"/>
    </location>
</feature>
<feature type="active site" description="Nucleophile" evidence="1">
    <location>
        <position position="192"/>
    </location>
</feature>
<feature type="binding site" evidence="1">
    <location>
        <position position="155"/>
    </location>
    <ligand>
        <name>substrate</name>
    </ligand>
</feature>
<feature type="binding site" evidence="1">
    <location>
        <position position="181"/>
    </location>
    <ligand>
        <name>substrate</name>
    </ligand>
</feature>
<feature type="binding site" evidence="1">
    <location>
        <position position="192"/>
    </location>
    <ligand>
        <name>substrate</name>
    </ligand>
</feature>
<feature type="binding site" evidence="1">
    <location>
        <position position="278"/>
    </location>
    <ligand>
        <name>substrate</name>
    </ligand>
</feature>
<feature type="binding site" evidence="1">
    <location>
        <position position="400"/>
    </location>
    <ligand>
        <name>substrate</name>
    </ligand>
</feature>
<feature type="binding site" evidence="1">
    <location>
        <position position="405"/>
    </location>
    <ligand>
        <name>substrate</name>
    </ligand>
</feature>
<feature type="site" description="Involved in the stabilization of negative charge on the oxyanion by the formation of the oxyanion hole" evidence="1">
    <location>
        <position position="120"/>
    </location>
</feature>
<feature type="site" description="Involved in the stabilization of negative charge on the oxyanion by the formation of the oxyanion hole" evidence="1">
    <location>
        <position position="121"/>
    </location>
</feature>
<feature type="site" description="Cleavage; by autolysis" evidence="1">
    <location>
        <begin position="191"/>
        <end position="192"/>
    </location>
</feature>
<accession>Q3ZYG4</accession>
<comment type="function">
    <text evidence="1">Catalyzes two activities which are involved in the cyclic version of arginine biosynthesis: the synthesis of N-acetylglutamate from glutamate and acetyl-CoA as the acetyl donor, and of ornithine by transacetylation between N(2)-acetylornithine and glutamate.</text>
</comment>
<comment type="catalytic activity">
    <reaction evidence="1">
        <text>N(2)-acetyl-L-ornithine + L-glutamate = N-acetyl-L-glutamate + L-ornithine</text>
        <dbReference type="Rhea" id="RHEA:15349"/>
        <dbReference type="ChEBI" id="CHEBI:29985"/>
        <dbReference type="ChEBI" id="CHEBI:44337"/>
        <dbReference type="ChEBI" id="CHEBI:46911"/>
        <dbReference type="ChEBI" id="CHEBI:57805"/>
        <dbReference type="EC" id="2.3.1.35"/>
    </reaction>
</comment>
<comment type="catalytic activity">
    <reaction evidence="1">
        <text>L-glutamate + acetyl-CoA = N-acetyl-L-glutamate + CoA + H(+)</text>
        <dbReference type="Rhea" id="RHEA:24292"/>
        <dbReference type="ChEBI" id="CHEBI:15378"/>
        <dbReference type="ChEBI" id="CHEBI:29985"/>
        <dbReference type="ChEBI" id="CHEBI:44337"/>
        <dbReference type="ChEBI" id="CHEBI:57287"/>
        <dbReference type="ChEBI" id="CHEBI:57288"/>
        <dbReference type="EC" id="2.3.1.1"/>
    </reaction>
</comment>
<comment type="pathway">
    <text evidence="1">Amino-acid biosynthesis; L-arginine biosynthesis; L-ornithine and N-acetyl-L-glutamate from L-glutamate and N(2)-acetyl-L-ornithine (cyclic): step 1/1.</text>
</comment>
<comment type="pathway">
    <text evidence="1">Amino-acid biosynthesis; L-arginine biosynthesis; N(2)-acetyl-L-ornithine from L-glutamate: step 1/4.</text>
</comment>
<comment type="subunit">
    <text evidence="1">Heterotetramer of two alpha and two beta chains.</text>
</comment>
<comment type="subcellular location">
    <subcellularLocation>
        <location evidence="1">Cytoplasm</location>
    </subcellularLocation>
</comment>
<comment type="similarity">
    <text evidence="1">Belongs to the ArgJ family.</text>
</comment>
<protein>
    <recommendedName>
        <fullName evidence="1">Arginine biosynthesis bifunctional protein ArgJ</fullName>
    </recommendedName>
    <domain>
        <recommendedName>
            <fullName evidence="1">Glutamate N-acetyltransferase</fullName>
            <ecNumber evidence="1">2.3.1.35</ecNumber>
        </recommendedName>
        <alternativeName>
            <fullName evidence="1">Ornithine acetyltransferase</fullName>
            <shortName evidence="1">OATase</shortName>
        </alternativeName>
        <alternativeName>
            <fullName evidence="1">Ornithine transacetylase</fullName>
        </alternativeName>
    </domain>
    <domain>
        <recommendedName>
            <fullName evidence="1">Amino-acid acetyltransferase</fullName>
            <ecNumber evidence="1">2.3.1.1</ecNumber>
        </recommendedName>
        <alternativeName>
            <fullName evidence="1">N-acetylglutamate synthase</fullName>
            <shortName evidence="1">AGSase</shortName>
        </alternativeName>
    </domain>
    <component>
        <recommendedName>
            <fullName evidence="1">Arginine biosynthesis bifunctional protein ArgJ alpha chain</fullName>
        </recommendedName>
    </component>
    <component>
        <recommendedName>
            <fullName evidence="1">Arginine biosynthesis bifunctional protein ArgJ beta chain</fullName>
        </recommendedName>
    </component>
</protein>
<organism>
    <name type="scientific">Dehalococcoides mccartyi (strain CBDB1)</name>
    <dbReference type="NCBI Taxonomy" id="255470"/>
    <lineage>
        <taxon>Bacteria</taxon>
        <taxon>Bacillati</taxon>
        <taxon>Chloroflexota</taxon>
        <taxon>Dehalococcoidia</taxon>
        <taxon>Dehalococcoidales</taxon>
        <taxon>Dehalococcoidaceae</taxon>
        <taxon>Dehalococcoides</taxon>
    </lineage>
</organism>
<name>ARGJ_DEHMC</name>
<gene>
    <name evidence="1" type="primary">argJ</name>
    <name type="ordered locus">cbdbA1179</name>
</gene>